<name>CYSI_STAHJ</name>
<evidence type="ECO:0000255" key="1">
    <source>
        <dbReference type="HAMAP-Rule" id="MF_01540"/>
    </source>
</evidence>
<gene>
    <name evidence="1" type="primary">cysI</name>
    <name type="ordered locus">SH0415</name>
</gene>
<protein>
    <recommendedName>
        <fullName evidence="1">Sulfite reductase [NADPH] hemoprotein beta-component</fullName>
        <shortName evidence="1">SiR-HP</shortName>
        <shortName evidence="1">SiRHP</shortName>
        <ecNumber evidence="1">1.8.1.2</ecNumber>
    </recommendedName>
</protein>
<reference key="1">
    <citation type="journal article" date="2005" name="J. Bacteriol.">
        <title>Whole-genome sequencing of Staphylococcus haemolyticus uncovers the extreme plasticity of its genome and the evolution of human-colonizing staphylococcal species.</title>
        <authorList>
            <person name="Takeuchi F."/>
            <person name="Watanabe S."/>
            <person name="Baba T."/>
            <person name="Yuzawa H."/>
            <person name="Ito T."/>
            <person name="Morimoto Y."/>
            <person name="Kuroda M."/>
            <person name="Cui L."/>
            <person name="Takahashi M."/>
            <person name="Ankai A."/>
            <person name="Baba S."/>
            <person name="Fukui S."/>
            <person name="Lee J.C."/>
            <person name="Hiramatsu K."/>
        </authorList>
    </citation>
    <scope>NUCLEOTIDE SEQUENCE [LARGE SCALE GENOMIC DNA]</scope>
    <source>
        <strain>JCSC1435</strain>
    </source>
</reference>
<sequence>MAKTNKQMSEELDKKLDALEYLKDESNYLRGTIEQGLADPLTGAISDDDTKLLKFHGSYQQDDRDLRDERRKQKLEPAYSFMIRVRLPGGTATPEQWLAMDDISNNYANQTLKLTTRQTFQFHGILKRNLKTSMKKINESVLDTIAACGDVNRNTMCNPNPYQSHIHKEINNYATKISDHLLPKTNAYHEIWLDGEKVLDSSEEIEPMYGKKYLPRKFKIGIALPPSNDIDVYSQDIGLIGIVEDETLVGFNVTVGGGMGMTHGNTDTYPQVGRLAGFVPKEQVVDVCEKILTIQRDYGNRENRKNARFKYTVDRLGVDKVVEELNTRLGWEIEEPRDFEFEHNGDRLGWIEGDKGVWNYTLFIQNGRVKDTEDYQLKTALRKIAETHTGDFRLSPNQNLIIANVTPEKKEEIQSLIDQYGLTDGKNYTGLRRNSMACVAFPTCGLAMAESERYLPSLISKIEDLLDEAGVDDEEITIRMTGCPNGCARPALAEIAFIGKAPGKYNMYLGGGFKGERLNKLYKENIGEQEILESLRPILMDYGKERLEGEHFGDFVIRSGVVAKVHGGQDFHS</sequence>
<accession>Q4L9F1</accession>
<proteinExistence type="inferred from homology"/>
<organism>
    <name type="scientific">Staphylococcus haemolyticus (strain JCSC1435)</name>
    <dbReference type="NCBI Taxonomy" id="279808"/>
    <lineage>
        <taxon>Bacteria</taxon>
        <taxon>Bacillati</taxon>
        <taxon>Bacillota</taxon>
        <taxon>Bacilli</taxon>
        <taxon>Bacillales</taxon>
        <taxon>Staphylococcaceae</taxon>
        <taxon>Staphylococcus</taxon>
    </lineage>
</organism>
<feature type="chain" id="PRO_0000388523" description="Sulfite reductase [NADPH] hemoprotein beta-component">
    <location>
        <begin position="1"/>
        <end position="573"/>
    </location>
</feature>
<feature type="binding site" evidence="1">
    <location>
        <position position="438"/>
    </location>
    <ligand>
        <name>[4Fe-4S] cluster</name>
        <dbReference type="ChEBI" id="CHEBI:49883"/>
    </ligand>
</feature>
<feature type="binding site" evidence="1">
    <location>
        <position position="444"/>
    </location>
    <ligand>
        <name>[4Fe-4S] cluster</name>
        <dbReference type="ChEBI" id="CHEBI:49883"/>
    </ligand>
</feature>
<feature type="binding site" evidence="1">
    <location>
        <position position="483"/>
    </location>
    <ligand>
        <name>[4Fe-4S] cluster</name>
        <dbReference type="ChEBI" id="CHEBI:49883"/>
    </ligand>
</feature>
<feature type="binding site" evidence="1">
    <location>
        <position position="487"/>
    </location>
    <ligand>
        <name>[4Fe-4S] cluster</name>
        <dbReference type="ChEBI" id="CHEBI:49883"/>
    </ligand>
</feature>
<feature type="binding site" description="axial binding residue" evidence="1">
    <location>
        <position position="487"/>
    </location>
    <ligand>
        <name>siroheme</name>
        <dbReference type="ChEBI" id="CHEBI:60052"/>
    </ligand>
    <ligandPart>
        <name>Fe</name>
        <dbReference type="ChEBI" id="CHEBI:18248"/>
    </ligandPart>
</feature>
<comment type="function">
    <text evidence="1">Component of the sulfite reductase complex that catalyzes the 6-electron reduction of sulfite to sulfide. This is one of several activities required for the biosynthesis of L-cysteine from sulfate.</text>
</comment>
<comment type="catalytic activity">
    <reaction evidence="1">
        <text>hydrogen sulfide + 3 NADP(+) + 3 H2O = sulfite + 3 NADPH + 4 H(+)</text>
        <dbReference type="Rhea" id="RHEA:13801"/>
        <dbReference type="ChEBI" id="CHEBI:15377"/>
        <dbReference type="ChEBI" id="CHEBI:15378"/>
        <dbReference type="ChEBI" id="CHEBI:17359"/>
        <dbReference type="ChEBI" id="CHEBI:29919"/>
        <dbReference type="ChEBI" id="CHEBI:57783"/>
        <dbReference type="ChEBI" id="CHEBI:58349"/>
        <dbReference type="EC" id="1.8.1.2"/>
    </reaction>
</comment>
<comment type="cofactor">
    <cofactor evidence="1">
        <name>siroheme</name>
        <dbReference type="ChEBI" id="CHEBI:60052"/>
    </cofactor>
    <text evidence="1">Binds 1 siroheme per subunit.</text>
</comment>
<comment type="cofactor">
    <cofactor evidence="1">
        <name>[4Fe-4S] cluster</name>
        <dbReference type="ChEBI" id="CHEBI:49883"/>
    </cofactor>
    <text evidence="1">Binds 1 [4Fe-4S] cluster per subunit.</text>
</comment>
<comment type="pathway">
    <text evidence="1">Sulfur metabolism; hydrogen sulfide biosynthesis; hydrogen sulfide from sulfite (NADPH route): step 1/1.</text>
</comment>
<comment type="subunit">
    <text evidence="1">Alpha(8)-beta(8). The alpha component is a flavoprotein, the beta component is a hemoprotein.</text>
</comment>
<comment type="similarity">
    <text evidence="1">Belongs to the nitrite and sulfite reductase 4Fe-4S domain family.</text>
</comment>
<keyword id="KW-0004">4Fe-4S</keyword>
<keyword id="KW-0028">Amino-acid biosynthesis</keyword>
<keyword id="KW-0198">Cysteine biosynthesis</keyword>
<keyword id="KW-0349">Heme</keyword>
<keyword id="KW-0408">Iron</keyword>
<keyword id="KW-0411">Iron-sulfur</keyword>
<keyword id="KW-0479">Metal-binding</keyword>
<keyword id="KW-0521">NADP</keyword>
<keyword id="KW-0560">Oxidoreductase</keyword>
<dbReference type="EC" id="1.8.1.2" evidence="1"/>
<dbReference type="EMBL" id="AP006716">
    <property type="protein sequence ID" value="BAE03724.1"/>
    <property type="molecule type" value="Genomic_DNA"/>
</dbReference>
<dbReference type="RefSeq" id="WP_011274741.1">
    <property type="nucleotide sequence ID" value="NC_007168.1"/>
</dbReference>
<dbReference type="SMR" id="Q4L9F1"/>
<dbReference type="KEGG" id="sha:SH0415"/>
<dbReference type="eggNOG" id="COG0155">
    <property type="taxonomic scope" value="Bacteria"/>
</dbReference>
<dbReference type="HOGENOM" id="CLU_001975_3_2_9"/>
<dbReference type="OrthoDB" id="9803707at2"/>
<dbReference type="UniPathway" id="UPA00140">
    <property type="reaction ID" value="UER00207"/>
</dbReference>
<dbReference type="Proteomes" id="UP000000543">
    <property type="component" value="Chromosome"/>
</dbReference>
<dbReference type="GO" id="GO:0009337">
    <property type="term" value="C:sulfite reductase complex (NADPH)"/>
    <property type="evidence" value="ECO:0007669"/>
    <property type="project" value="InterPro"/>
</dbReference>
<dbReference type="GO" id="GO:0051539">
    <property type="term" value="F:4 iron, 4 sulfur cluster binding"/>
    <property type="evidence" value="ECO:0007669"/>
    <property type="project" value="UniProtKB-KW"/>
</dbReference>
<dbReference type="GO" id="GO:0020037">
    <property type="term" value="F:heme binding"/>
    <property type="evidence" value="ECO:0007669"/>
    <property type="project" value="InterPro"/>
</dbReference>
<dbReference type="GO" id="GO:0046872">
    <property type="term" value="F:metal ion binding"/>
    <property type="evidence" value="ECO:0007669"/>
    <property type="project" value="UniProtKB-KW"/>
</dbReference>
<dbReference type="GO" id="GO:0050661">
    <property type="term" value="F:NADP binding"/>
    <property type="evidence" value="ECO:0007669"/>
    <property type="project" value="InterPro"/>
</dbReference>
<dbReference type="GO" id="GO:0050311">
    <property type="term" value="F:sulfite reductase (ferredoxin) activity"/>
    <property type="evidence" value="ECO:0007669"/>
    <property type="project" value="TreeGrafter"/>
</dbReference>
<dbReference type="GO" id="GO:0004783">
    <property type="term" value="F:sulfite reductase (NADPH) activity"/>
    <property type="evidence" value="ECO:0007669"/>
    <property type="project" value="UniProtKB-UniRule"/>
</dbReference>
<dbReference type="GO" id="GO:0019344">
    <property type="term" value="P:cysteine biosynthetic process"/>
    <property type="evidence" value="ECO:0007669"/>
    <property type="project" value="UniProtKB-KW"/>
</dbReference>
<dbReference type="GO" id="GO:0070814">
    <property type="term" value="P:hydrogen sulfide biosynthetic process"/>
    <property type="evidence" value="ECO:0007669"/>
    <property type="project" value="UniProtKB-UniRule"/>
</dbReference>
<dbReference type="GO" id="GO:0000103">
    <property type="term" value="P:sulfate assimilation"/>
    <property type="evidence" value="ECO:0007669"/>
    <property type="project" value="UniProtKB-UniRule"/>
</dbReference>
<dbReference type="FunFam" id="3.30.413.10:FF:000003">
    <property type="entry name" value="Sulfite reductase [NADPH] hemoprotein beta-component"/>
    <property type="match status" value="1"/>
</dbReference>
<dbReference type="FunFam" id="3.30.413.10:FF:000004">
    <property type="entry name" value="Sulfite reductase [NADPH] hemoprotein beta-component"/>
    <property type="match status" value="1"/>
</dbReference>
<dbReference type="Gene3D" id="3.30.413.10">
    <property type="entry name" value="Sulfite Reductase Hemoprotein, domain 1"/>
    <property type="match status" value="2"/>
</dbReference>
<dbReference type="HAMAP" id="MF_01540">
    <property type="entry name" value="CysI"/>
    <property type="match status" value="1"/>
</dbReference>
<dbReference type="InterPro" id="IPR011786">
    <property type="entry name" value="CysI"/>
</dbReference>
<dbReference type="InterPro" id="IPR005117">
    <property type="entry name" value="NiRdtase/SiRdtase_haem-b_fer"/>
</dbReference>
<dbReference type="InterPro" id="IPR036136">
    <property type="entry name" value="Nit/Sulf_reduc_fer-like_dom_sf"/>
</dbReference>
<dbReference type="InterPro" id="IPR006067">
    <property type="entry name" value="NO2/SO3_Rdtase_4Fe4S_dom"/>
</dbReference>
<dbReference type="InterPro" id="IPR045169">
    <property type="entry name" value="NO2/SO3_Rdtase_4Fe4S_prot"/>
</dbReference>
<dbReference type="InterPro" id="IPR045854">
    <property type="entry name" value="NO2/SO3_Rdtase_4Fe4S_sf"/>
</dbReference>
<dbReference type="InterPro" id="IPR006066">
    <property type="entry name" value="NO2/SO3_Rdtase_FeS/sirohaem_BS"/>
</dbReference>
<dbReference type="NCBIfam" id="TIGR02041">
    <property type="entry name" value="CysI"/>
    <property type="match status" value="1"/>
</dbReference>
<dbReference type="NCBIfam" id="NF010029">
    <property type="entry name" value="PRK13504.1"/>
    <property type="match status" value="1"/>
</dbReference>
<dbReference type="PANTHER" id="PTHR11493:SF47">
    <property type="entry name" value="SULFITE REDUCTASE [NADPH] SUBUNIT BETA"/>
    <property type="match status" value="1"/>
</dbReference>
<dbReference type="PANTHER" id="PTHR11493">
    <property type="entry name" value="SULFITE REDUCTASE [NADPH] SUBUNIT BETA-RELATED"/>
    <property type="match status" value="1"/>
</dbReference>
<dbReference type="Pfam" id="PF01077">
    <property type="entry name" value="NIR_SIR"/>
    <property type="match status" value="1"/>
</dbReference>
<dbReference type="Pfam" id="PF03460">
    <property type="entry name" value="NIR_SIR_ferr"/>
    <property type="match status" value="2"/>
</dbReference>
<dbReference type="PRINTS" id="PR00397">
    <property type="entry name" value="SIROHAEM"/>
</dbReference>
<dbReference type="SUPFAM" id="SSF56014">
    <property type="entry name" value="Nitrite and sulphite reductase 4Fe-4S domain-like"/>
    <property type="match status" value="2"/>
</dbReference>
<dbReference type="SUPFAM" id="SSF55124">
    <property type="entry name" value="Nitrite/Sulfite reductase N-terminal domain-like"/>
    <property type="match status" value="2"/>
</dbReference>
<dbReference type="PROSITE" id="PS00365">
    <property type="entry name" value="NIR_SIR"/>
    <property type="match status" value="1"/>
</dbReference>